<reference key="1">
    <citation type="journal article" date="2003" name="Nature">
        <title>Genome divergence in two Prochlorococcus ecotypes reflects oceanic niche differentiation.</title>
        <authorList>
            <person name="Rocap G."/>
            <person name="Larimer F.W."/>
            <person name="Lamerdin J.E."/>
            <person name="Malfatti S."/>
            <person name="Chain P."/>
            <person name="Ahlgren N.A."/>
            <person name="Arellano A."/>
            <person name="Coleman M."/>
            <person name="Hauser L."/>
            <person name="Hess W.R."/>
            <person name="Johnson Z.I."/>
            <person name="Land M.L."/>
            <person name="Lindell D."/>
            <person name="Post A.F."/>
            <person name="Regala W."/>
            <person name="Shah M."/>
            <person name="Shaw S.L."/>
            <person name="Steglich C."/>
            <person name="Sullivan M.B."/>
            <person name="Ting C.S."/>
            <person name="Tolonen A."/>
            <person name="Webb E.A."/>
            <person name="Zinser E.R."/>
            <person name="Chisholm S.W."/>
        </authorList>
    </citation>
    <scope>NUCLEOTIDE SEQUENCE [LARGE SCALE GENOMIC DNA]</scope>
    <source>
        <strain>CCMP1986 / NIES-2087 / MED4</strain>
    </source>
</reference>
<sequence>MLSPKRTKFRKQHRGRMKGIASKGNTIAFGQFALQAQDCGWVTARQIEASRRAMTRYVKRGGKIWIRIFPDKPVTMRPAETRMGSGKGNPEFWVAVVKPGRILFEMGGEEITEEIAKEAMRLAQYKLPVKTKFISSDINLSSDSSGEGKTGKDSKEEVKK</sequence>
<evidence type="ECO:0000255" key="1">
    <source>
        <dbReference type="HAMAP-Rule" id="MF_01342"/>
    </source>
</evidence>
<evidence type="ECO:0000256" key="2">
    <source>
        <dbReference type="SAM" id="MobiDB-lite"/>
    </source>
</evidence>
<evidence type="ECO:0000305" key="3"/>
<accession>Q7UZV3</accession>
<name>RL16_PROMP</name>
<feature type="chain" id="PRO_0000062170" description="Large ribosomal subunit protein uL16">
    <location>
        <begin position="1"/>
        <end position="160"/>
    </location>
</feature>
<feature type="region of interest" description="Disordered" evidence="2">
    <location>
        <begin position="138"/>
        <end position="160"/>
    </location>
</feature>
<feature type="compositionally biased region" description="Basic and acidic residues" evidence="2">
    <location>
        <begin position="149"/>
        <end position="160"/>
    </location>
</feature>
<keyword id="KW-0687">Ribonucleoprotein</keyword>
<keyword id="KW-0689">Ribosomal protein</keyword>
<keyword id="KW-0694">RNA-binding</keyword>
<keyword id="KW-0699">rRNA-binding</keyword>
<keyword id="KW-0820">tRNA-binding</keyword>
<protein>
    <recommendedName>
        <fullName evidence="1">Large ribosomal subunit protein uL16</fullName>
    </recommendedName>
    <alternativeName>
        <fullName evidence="3">50S ribosomal protein L16</fullName>
    </alternativeName>
</protein>
<dbReference type="EMBL" id="BX548174">
    <property type="protein sequence ID" value="CAE20010.1"/>
    <property type="molecule type" value="Genomic_DNA"/>
</dbReference>
<dbReference type="RefSeq" id="WP_011133179.1">
    <property type="nucleotide sequence ID" value="NC_005072.1"/>
</dbReference>
<dbReference type="SMR" id="Q7UZV3"/>
<dbReference type="STRING" id="59919.PMM1551"/>
<dbReference type="KEGG" id="pmm:PMM1551"/>
<dbReference type="eggNOG" id="COG0197">
    <property type="taxonomic scope" value="Bacteria"/>
</dbReference>
<dbReference type="HOGENOM" id="CLU_078858_2_1_3"/>
<dbReference type="OrthoDB" id="9802589at2"/>
<dbReference type="Proteomes" id="UP000001026">
    <property type="component" value="Chromosome"/>
</dbReference>
<dbReference type="GO" id="GO:1990904">
    <property type="term" value="C:ribonucleoprotein complex"/>
    <property type="evidence" value="ECO:0007669"/>
    <property type="project" value="UniProtKB-KW"/>
</dbReference>
<dbReference type="GO" id="GO:0005840">
    <property type="term" value="C:ribosome"/>
    <property type="evidence" value="ECO:0007669"/>
    <property type="project" value="UniProtKB-KW"/>
</dbReference>
<dbReference type="GO" id="GO:0019843">
    <property type="term" value="F:rRNA binding"/>
    <property type="evidence" value="ECO:0007669"/>
    <property type="project" value="UniProtKB-UniRule"/>
</dbReference>
<dbReference type="GO" id="GO:0003735">
    <property type="term" value="F:structural constituent of ribosome"/>
    <property type="evidence" value="ECO:0007669"/>
    <property type="project" value="InterPro"/>
</dbReference>
<dbReference type="GO" id="GO:0000049">
    <property type="term" value="F:tRNA binding"/>
    <property type="evidence" value="ECO:0007669"/>
    <property type="project" value="UniProtKB-KW"/>
</dbReference>
<dbReference type="GO" id="GO:0006412">
    <property type="term" value="P:translation"/>
    <property type="evidence" value="ECO:0007669"/>
    <property type="project" value="UniProtKB-UniRule"/>
</dbReference>
<dbReference type="CDD" id="cd01433">
    <property type="entry name" value="Ribosomal_L16_L10e"/>
    <property type="match status" value="1"/>
</dbReference>
<dbReference type="FunFam" id="3.90.1170.10:FF:000001">
    <property type="entry name" value="50S ribosomal protein L16"/>
    <property type="match status" value="1"/>
</dbReference>
<dbReference type="Gene3D" id="3.90.1170.10">
    <property type="entry name" value="Ribosomal protein L10e/L16"/>
    <property type="match status" value="1"/>
</dbReference>
<dbReference type="HAMAP" id="MF_01342">
    <property type="entry name" value="Ribosomal_uL16"/>
    <property type="match status" value="1"/>
</dbReference>
<dbReference type="InterPro" id="IPR047873">
    <property type="entry name" value="Ribosomal_uL16"/>
</dbReference>
<dbReference type="InterPro" id="IPR000114">
    <property type="entry name" value="Ribosomal_uL16_bact-type"/>
</dbReference>
<dbReference type="InterPro" id="IPR020798">
    <property type="entry name" value="Ribosomal_uL16_CS"/>
</dbReference>
<dbReference type="InterPro" id="IPR016180">
    <property type="entry name" value="Ribosomal_uL16_dom"/>
</dbReference>
<dbReference type="InterPro" id="IPR036920">
    <property type="entry name" value="Ribosomal_uL16_sf"/>
</dbReference>
<dbReference type="NCBIfam" id="TIGR01164">
    <property type="entry name" value="rplP_bact"/>
    <property type="match status" value="1"/>
</dbReference>
<dbReference type="PANTHER" id="PTHR12220">
    <property type="entry name" value="50S/60S RIBOSOMAL PROTEIN L16"/>
    <property type="match status" value="1"/>
</dbReference>
<dbReference type="PANTHER" id="PTHR12220:SF13">
    <property type="entry name" value="LARGE RIBOSOMAL SUBUNIT PROTEIN UL16M"/>
    <property type="match status" value="1"/>
</dbReference>
<dbReference type="Pfam" id="PF00252">
    <property type="entry name" value="Ribosomal_L16"/>
    <property type="match status" value="1"/>
</dbReference>
<dbReference type="PRINTS" id="PR00060">
    <property type="entry name" value="RIBOSOMALL16"/>
</dbReference>
<dbReference type="SUPFAM" id="SSF54686">
    <property type="entry name" value="Ribosomal protein L16p/L10e"/>
    <property type="match status" value="1"/>
</dbReference>
<dbReference type="PROSITE" id="PS00586">
    <property type="entry name" value="RIBOSOMAL_L16_1"/>
    <property type="match status" value="1"/>
</dbReference>
<dbReference type="PROSITE" id="PS00701">
    <property type="entry name" value="RIBOSOMAL_L16_2"/>
    <property type="match status" value="1"/>
</dbReference>
<gene>
    <name evidence="1" type="primary">rplP</name>
    <name evidence="1" type="synonym">rpl16</name>
    <name type="ordered locus">PMM1551</name>
</gene>
<proteinExistence type="inferred from homology"/>
<organism>
    <name type="scientific">Prochlorococcus marinus subsp. pastoris (strain CCMP1986 / NIES-2087 / MED4)</name>
    <dbReference type="NCBI Taxonomy" id="59919"/>
    <lineage>
        <taxon>Bacteria</taxon>
        <taxon>Bacillati</taxon>
        <taxon>Cyanobacteriota</taxon>
        <taxon>Cyanophyceae</taxon>
        <taxon>Synechococcales</taxon>
        <taxon>Prochlorococcaceae</taxon>
        <taxon>Prochlorococcus</taxon>
    </lineage>
</organism>
<comment type="function">
    <text evidence="1">Binds 23S rRNA and is also seen to make contacts with the A and possibly P site tRNAs.</text>
</comment>
<comment type="subunit">
    <text evidence="1">Part of the 50S ribosomal subunit.</text>
</comment>
<comment type="similarity">
    <text evidence="1">Belongs to the universal ribosomal protein uL16 family.</text>
</comment>